<protein>
    <recommendedName>
        <fullName evidence="1">Nucleotide-binding protein ACIAD3059</fullName>
    </recommendedName>
</protein>
<feature type="chain" id="PRO_0000107678" description="Nucleotide-binding protein ACIAD3059">
    <location>
        <begin position="1"/>
        <end position="283"/>
    </location>
</feature>
<feature type="binding site" evidence="1">
    <location>
        <begin position="9"/>
        <end position="16"/>
    </location>
    <ligand>
        <name>ATP</name>
        <dbReference type="ChEBI" id="CHEBI:30616"/>
    </ligand>
</feature>
<feature type="binding site" evidence="1">
    <location>
        <begin position="59"/>
        <end position="62"/>
    </location>
    <ligand>
        <name>GTP</name>
        <dbReference type="ChEBI" id="CHEBI:37565"/>
    </ligand>
</feature>
<accession>Q6F856</accession>
<dbReference type="EMBL" id="CR543861">
    <property type="protein sequence ID" value="CAG69759.1"/>
    <property type="molecule type" value="Genomic_DNA"/>
</dbReference>
<dbReference type="SMR" id="Q6F856"/>
<dbReference type="STRING" id="202950.GCA_001485005_02719"/>
<dbReference type="GeneID" id="45235281"/>
<dbReference type="KEGG" id="aci:ACIAD3059"/>
<dbReference type="eggNOG" id="COG1660">
    <property type="taxonomic scope" value="Bacteria"/>
</dbReference>
<dbReference type="HOGENOM" id="CLU_059558_1_1_6"/>
<dbReference type="OrthoDB" id="9784461at2"/>
<dbReference type="BioCyc" id="ASP62977:ACIAD_RS13830-MONOMER"/>
<dbReference type="Proteomes" id="UP000000430">
    <property type="component" value="Chromosome"/>
</dbReference>
<dbReference type="GO" id="GO:0005524">
    <property type="term" value="F:ATP binding"/>
    <property type="evidence" value="ECO:0007669"/>
    <property type="project" value="UniProtKB-UniRule"/>
</dbReference>
<dbReference type="GO" id="GO:0005525">
    <property type="term" value="F:GTP binding"/>
    <property type="evidence" value="ECO:0007669"/>
    <property type="project" value="UniProtKB-UniRule"/>
</dbReference>
<dbReference type="Gene3D" id="3.40.50.300">
    <property type="entry name" value="P-loop containing nucleotide triphosphate hydrolases"/>
    <property type="match status" value="1"/>
</dbReference>
<dbReference type="HAMAP" id="MF_00636">
    <property type="entry name" value="RapZ_like"/>
    <property type="match status" value="1"/>
</dbReference>
<dbReference type="InterPro" id="IPR027417">
    <property type="entry name" value="P-loop_NTPase"/>
</dbReference>
<dbReference type="InterPro" id="IPR005337">
    <property type="entry name" value="RapZ-like"/>
</dbReference>
<dbReference type="InterPro" id="IPR053930">
    <property type="entry name" value="RapZ-like_N"/>
</dbReference>
<dbReference type="InterPro" id="IPR053931">
    <property type="entry name" value="RapZ_C"/>
</dbReference>
<dbReference type="NCBIfam" id="NF003828">
    <property type="entry name" value="PRK05416.1"/>
    <property type="match status" value="1"/>
</dbReference>
<dbReference type="PANTHER" id="PTHR30448">
    <property type="entry name" value="RNASE ADAPTER PROTEIN RAPZ"/>
    <property type="match status" value="1"/>
</dbReference>
<dbReference type="PANTHER" id="PTHR30448:SF0">
    <property type="entry name" value="RNASE ADAPTER PROTEIN RAPZ"/>
    <property type="match status" value="1"/>
</dbReference>
<dbReference type="Pfam" id="PF22740">
    <property type="entry name" value="PapZ_C"/>
    <property type="match status" value="1"/>
</dbReference>
<dbReference type="Pfam" id="PF03668">
    <property type="entry name" value="RapZ-like_N"/>
    <property type="match status" value="1"/>
</dbReference>
<dbReference type="PIRSF" id="PIRSF005052">
    <property type="entry name" value="P-loopkin"/>
    <property type="match status" value="1"/>
</dbReference>
<dbReference type="SUPFAM" id="SSF52540">
    <property type="entry name" value="P-loop containing nucleoside triphosphate hydrolases"/>
    <property type="match status" value="1"/>
</dbReference>
<reference key="1">
    <citation type="journal article" date="2004" name="Nucleic Acids Res.">
        <title>Unique features revealed by the genome sequence of Acinetobacter sp. ADP1, a versatile and naturally transformation competent bacterium.</title>
        <authorList>
            <person name="Barbe V."/>
            <person name="Vallenet D."/>
            <person name="Fonknechten N."/>
            <person name="Kreimeyer A."/>
            <person name="Oztas S."/>
            <person name="Labarre L."/>
            <person name="Cruveiller S."/>
            <person name="Robert C."/>
            <person name="Duprat S."/>
            <person name="Wincker P."/>
            <person name="Ornston L.N."/>
            <person name="Weissenbach J."/>
            <person name="Marliere P."/>
            <person name="Cohen G.N."/>
            <person name="Medigue C."/>
        </authorList>
    </citation>
    <scope>NUCLEOTIDE SEQUENCE [LARGE SCALE GENOMIC DNA]</scope>
    <source>
        <strain>ATCC 33305 / BD413 / ADP1</strain>
    </source>
</reference>
<keyword id="KW-0067">ATP-binding</keyword>
<keyword id="KW-0342">GTP-binding</keyword>
<keyword id="KW-0547">Nucleotide-binding</keyword>
<evidence type="ECO:0000255" key="1">
    <source>
        <dbReference type="HAMAP-Rule" id="MF_00636"/>
    </source>
</evidence>
<comment type="function">
    <text evidence="1">Displays ATPase and GTPase activities.</text>
</comment>
<comment type="similarity">
    <text evidence="1">Belongs to the RapZ-like family.</text>
</comment>
<sequence length="283" mass="32681">MKRILIVTGQSGSGKSSALQVLEDLGYYCIDNLPLALLPEIVAKLDHENNLEQLALGVDVRSTRADMQEFDLVFEQLQKHGTVDVIYLTTQDQELIARFSASRRPHPLASRFKSLNECIQEEKQLLLPIQFRSTVHIDTTDKSVHDLKHTLLSKLGQSDKLILILQSFGYKHGIPLDADYVFDVRHLPNPHWDLELRRFSGLDEPVRRFLESSDQTNEMFDDIFHFLDKWLPVFAEGHRHYMTVSIGCTGGQHRSVYIVDRLKKALEAKWSIQVLHREMKHWS</sequence>
<name>Y3059_ACIAD</name>
<organism>
    <name type="scientific">Acinetobacter baylyi (strain ATCC 33305 / BD413 / ADP1)</name>
    <dbReference type="NCBI Taxonomy" id="62977"/>
    <lineage>
        <taxon>Bacteria</taxon>
        <taxon>Pseudomonadati</taxon>
        <taxon>Pseudomonadota</taxon>
        <taxon>Gammaproteobacteria</taxon>
        <taxon>Moraxellales</taxon>
        <taxon>Moraxellaceae</taxon>
        <taxon>Acinetobacter</taxon>
    </lineage>
</organism>
<proteinExistence type="inferred from homology"/>
<gene>
    <name type="ordered locus">ACIAD3059</name>
</gene>